<sequence length="490" mass="53279">MARFEEQKLYIGGRYVEASSGATFETINPANGEVLAKVQRASREDVERAVQSAVEGQKVWAAMTAMQRSRILRRAVDILRERNDELAALETLDTGKPLAETRSVDIVTGADVLEYYAGLVPAIEGEQIPLRETSFVYTRREPLGVVAGIGAWNYPVQIALWKSAPALAAGNAMIFKPSEVTPLTTLKLAEIYTEAGVPDGVFNVLTGSGREVGQWLTEHPLIEKISFTGGTSTGKKVMASASSSSLKEVTMELGGKSPLIIFPDADLDRAADIAVMANFFSSGQVCTNGTRVFIHRSQQARFEAKVLERVQRIRLGDPQDENTNFGPLVSFPHMESVLGYIESGKAQKARLLCGGERVTDGAFGNGAYVAPTVFTDCSDDMTIVREEIFGPVMSILVYDDEDEAIRRANDTEYGLAAGVVTQDLARAHRAIHRLEAGICWINTWGESPAEMPVGGYKQSGVGRENGLTTLAHYTRIKSVQVELGDYASVF</sequence>
<dbReference type="EC" id="1.2.1.8" evidence="1"/>
<dbReference type="EMBL" id="CP000438">
    <property type="protein sequence ID" value="ABJ14756.1"/>
    <property type="molecule type" value="Genomic_DNA"/>
</dbReference>
<dbReference type="RefSeq" id="WP_003142054.1">
    <property type="nucleotide sequence ID" value="NZ_CP034244.1"/>
</dbReference>
<dbReference type="SMR" id="Q02DY9"/>
<dbReference type="KEGG" id="pau:PA14_70950"/>
<dbReference type="PseudoCAP" id="PA14_70950"/>
<dbReference type="HOGENOM" id="CLU_005391_0_2_6"/>
<dbReference type="BioCyc" id="PAER208963:G1G74-5972-MONOMER"/>
<dbReference type="UniPathway" id="UPA00529">
    <property type="reaction ID" value="UER00386"/>
</dbReference>
<dbReference type="Proteomes" id="UP000000653">
    <property type="component" value="Chromosome"/>
</dbReference>
<dbReference type="GO" id="GO:0008802">
    <property type="term" value="F:betaine-aldehyde dehydrogenase (NAD+) activity"/>
    <property type="evidence" value="ECO:0007669"/>
    <property type="project" value="UniProtKB-UniRule"/>
</dbReference>
<dbReference type="GO" id="GO:0046872">
    <property type="term" value="F:metal ion binding"/>
    <property type="evidence" value="ECO:0007669"/>
    <property type="project" value="UniProtKB-KW"/>
</dbReference>
<dbReference type="GO" id="GO:0019285">
    <property type="term" value="P:glycine betaine biosynthetic process from choline"/>
    <property type="evidence" value="ECO:0007669"/>
    <property type="project" value="UniProtKB-UniRule"/>
</dbReference>
<dbReference type="CDD" id="cd07090">
    <property type="entry name" value="ALDH_F9_TMBADH"/>
    <property type="match status" value="1"/>
</dbReference>
<dbReference type="FunFam" id="3.40.309.10:FF:000014">
    <property type="entry name" value="NAD/NADP-dependent betaine aldehyde dehydrogenase"/>
    <property type="match status" value="1"/>
</dbReference>
<dbReference type="FunFam" id="3.40.605.10:FF:000007">
    <property type="entry name" value="NAD/NADP-dependent betaine aldehyde dehydrogenase"/>
    <property type="match status" value="1"/>
</dbReference>
<dbReference type="Gene3D" id="3.40.605.10">
    <property type="entry name" value="Aldehyde Dehydrogenase, Chain A, domain 1"/>
    <property type="match status" value="1"/>
</dbReference>
<dbReference type="Gene3D" id="3.40.309.10">
    <property type="entry name" value="Aldehyde Dehydrogenase, Chain A, domain 2"/>
    <property type="match status" value="1"/>
</dbReference>
<dbReference type="HAMAP" id="MF_00804">
    <property type="entry name" value="BADH"/>
    <property type="match status" value="1"/>
</dbReference>
<dbReference type="InterPro" id="IPR016161">
    <property type="entry name" value="Ald_DH/histidinol_DH"/>
</dbReference>
<dbReference type="InterPro" id="IPR016163">
    <property type="entry name" value="Ald_DH_C"/>
</dbReference>
<dbReference type="InterPro" id="IPR016160">
    <property type="entry name" value="Ald_DH_CS_CYS"/>
</dbReference>
<dbReference type="InterPro" id="IPR029510">
    <property type="entry name" value="Ald_DH_CS_GLU"/>
</dbReference>
<dbReference type="InterPro" id="IPR016162">
    <property type="entry name" value="Ald_DH_N"/>
</dbReference>
<dbReference type="InterPro" id="IPR015590">
    <property type="entry name" value="Aldehyde_DH_dom"/>
</dbReference>
<dbReference type="InterPro" id="IPR011264">
    <property type="entry name" value="BADH"/>
</dbReference>
<dbReference type="NCBIfam" id="TIGR01804">
    <property type="entry name" value="BADH"/>
    <property type="match status" value="1"/>
</dbReference>
<dbReference type="NCBIfam" id="NF009725">
    <property type="entry name" value="PRK13252.1"/>
    <property type="match status" value="1"/>
</dbReference>
<dbReference type="PANTHER" id="PTHR11699">
    <property type="entry name" value="ALDEHYDE DEHYDROGENASE-RELATED"/>
    <property type="match status" value="1"/>
</dbReference>
<dbReference type="Pfam" id="PF00171">
    <property type="entry name" value="Aldedh"/>
    <property type="match status" value="1"/>
</dbReference>
<dbReference type="SUPFAM" id="SSF53720">
    <property type="entry name" value="ALDH-like"/>
    <property type="match status" value="1"/>
</dbReference>
<dbReference type="PROSITE" id="PS00070">
    <property type="entry name" value="ALDEHYDE_DEHYDR_CYS"/>
    <property type="match status" value="1"/>
</dbReference>
<dbReference type="PROSITE" id="PS00687">
    <property type="entry name" value="ALDEHYDE_DEHYDR_GLU"/>
    <property type="match status" value="1"/>
</dbReference>
<feature type="chain" id="PRO_1000047046" description="Betaine aldehyde dehydrogenase">
    <location>
        <begin position="1"/>
        <end position="490"/>
    </location>
</feature>
<feature type="active site" description="Charge relay system" evidence="1">
    <location>
        <position position="162"/>
    </location>
</feature>
<feature type="active site" description="Proton acceptor" evidence="1">
    <location>
        <position position="252"/>
    </location>
</feature>
<feature type="active site" description="Nucleophile" evidence="1">
    <location>
        <position position="286"/>
    </location>
</feature>
<feature type="active site" description="Charge relay system" evidence="1">
    <location>
        <position position="464"/>
    </location>
</feature>
<feature type="binding site" evidence="1">
    <location>
        <position position="26"/>
    </location>
    <ligand>
        <name>K(+)</name>
        <dbReference type="ChEBI" id="CHEBI:29103"/>
        <label>1</label>
    </ligand>
</feature>
<feature type="binding site" evidence="1">
    <location>
        <position position="27"/>
    </location>
    <ligand>
        <name>K(+)</name>
        <dbReference type="ChEBI" id="CHEBI:29103"/>
        <label>1</label>
    </ligand>
</feature>
<feature type="binding site" evidence="1">
    <location>
        <position position="93"/>
    </location>
    <ligand>
        <name>K(+)</name>
        <dbReference type="ChEBI" id="CHEBI:29103"/>
        <label>1</label>
    </ligand>
</feature>
<feature type="binding site" evidence="1">
    <location>
        <begin position="150"/>
        <end position="152"/>
    </location>
    <ligand>
        <name>NAD(+)</name>
        <dbReference type="ChEBI" id="CHEBI:57540"/>
    </ligand>
</feature>
<feature type="binding site" evidence="1">
    <location>
        <begin position="176"/>
        <end position="179"/>
    </location>
    <ligand>
        <name>NAD(+)</name>
        <dbReference type="ChEBI" id="CHEBI:57540"/>
    </ligand>
</feature>
<feature type="binding site" evidence="1">
    <location>
        <position position="180"/>
    </location>
    <ligand>
        <name>K(+)</name>
        <dbReference type="ChEBI" id="CHEBI:29103"/>
        <label>1</label>
    </ligand>
</feature>
<feature type="binding site" evidence="1">
    <location>
        <begin position="230"/>
        <end position="233"/>
    </location>
    <ligand>
        <name>NAD(+)</name>
        <dbReference type="ChEBI" id="CHEBI:57540"/>
    </ligand>
</feature>
<feature type="binding site" evidence="1">
    <location>
        <position position="246"/>
    </location>
    <ligand>
        <name>K(+)</name>
        <dbReference type="ChEBI" id="CHEBI:29103"/>
        <label>2</label>
    </ligand>
</feature>
<feature type="binding site" evidence="1">
    <location>
        <position position="254"/>
    </location>
    <ligand>
        <name>NAD(+)</name>
        <dbReference type="ChEBI" id="CHEBI:57540"/>
    </ligand>
</feature>
<feature type="binding site" description="covalent" evidence="1">
    <location>
        <position position="286"/>
    </location>
    <ligand>
        <name>NAD(+)</name>
        <dbReference type="ChEBI" id="CHEBI:57540"/>
    </ligand>
</feature>
<feature type="binding site" evidence="1">
    <location>
        <position position="387"/>
    </location>
    <ligand>
        <name>NAD(+)</name>
        <dbReference type="ChEBI" id="CHEBI:57540"/>
    </ligand>
</feature>
<feature type="binding site" evidence="1">
    <location>
        <position position="457"/>
    </location>
    <ligand>
        <name>K(+)</name>
        <dbReference type="ChEBI" id="CHEBI:29103"/>
        <label>2</label>
    </ligand>
</feature>
<feature type="binding site" evidence="1">
    <location>
        <position position="460"/>
    </location>
    <ligand>
        <name>K(+)</name>
        <dbReference type="ChEBI" id="CHEBI:29103"/>
        <label>2</label>
    </ligand>
</feature>
<feature type="site" description="Seems to be a necessary countercharge to the potassium cations" evidence="1">
    <location>
        <position position="248"/>
    </location>
</feature>
<feature type="modified residue" description="Cysteine sulfenic acid (-SOH)" evidence="1">
    <location>
        <position position="286"/>
    </location>
</feature>
<comment type="function">
    <text evidence="1">Involved in the biosynthesis of the osmoprotectant glycine betaine. Catalyzes the irreversible oxidation of betaine aldehyde to the corresponding acid.</text>
</comment>
<comment type="catalytic activity">
    <reaction evidence="1">
        <text>betaine aldehyde + NAD(+) + H2O = glycine betaine + NADH + 2 H(+)</text>
        <dbReference type="Rhea" id="RHEA:15305"/>
        <dbReference type="ChEBI" id="CHEBI:15377"/>
        <dbReference type="ChEBI" id="CHEBI:15378"/>
        <dbReference type="ChEBI" id="CHEBI:15710"/>
        <dbReference type="ChEBI" id="CHEBI:17750"/>
        <dbReference type="ChEBI" id="CHEBI:57540"/>
        <dbReference type="ChEBI" id="CHEBI:57945"/>
        <dbReference type="EC" id="1.2.1.8"/>
    </reaction>
    <physiologicalReaction direction="left-to-right" evidence="1">
        <dbReference type="Rhea" id="RHEA:15306"/>
    </physiologicalReaction>
</comment>
<comment type="cofactor">
    <cofactor evidence="1">
        <name>K(+)</name>
        <dbReference type="ChEBI" id="CHEBI:29103"/>
    </cofactor>
    <text evidence="1">Binds 2 potassium ions per subunit.</text>
</comment>
<comment type="pathway">
    <text evidence="1">Amine and polyamine biosynthesis; betaine biosynthesis via choline pathway; betaine from betaine aldehyde: step 1/1.</text>
</comment>
<comment type="subunit">
    <text evidence="1">Dimer of dimers.</text>
</comment>
<comment type="similarity">
    <text evidence="1">Belongs to the aldehyde dehydrogenase family.</text>
</comment>
<reference key="1">
    <citation type="journal article" date="2006" name="Genome Biol.">
        <title>Genomic analysis reveals that Pseudomonas aeruginosa virulence is combinatorial.</title>
        <authorList>
            <person name="Lee D.G."/>
            <person name="Urbach J.M."/>
            <person name="Wu G."/>
            <person name="Liberati N.T."/>
            <person name="Feinbaum R.L."/>
            <person name="Miyata S."/>
            <person name="Diggins L.T."/>
            <person name="He J."/>
            <person name="Saucier M."/>
            <person name="Deziel E."/>
            <person name="Friedman L."/>
            <person name="Li L."/>
            <person name="Grills G."/>
            <person name="Montgomery K."/>
            <person name="Kucherlapati R."/>
            <person name="Rahme L.G."/>
            <person name="Ausubel F.M."/>
        </authorList>
    </citation>
    <scope>NUCLEOTIDE SEQUENCE [LARGE SCALE GENOMIC DNA]</scope>
    <source>
        <strain>UCBPP-PA14</strain>
    </source>
</reference>
<keyword id="KW-0479">Metal-binding</keyword>
<keyword id="KW-0520">NAD</keyword>
<keyword id="KW-0521">NADP</keyword>
<keyword id="KW-0558">Oxidation</keyword>
<keyword id="KW-0560">Oxidoreductase</keyword>
<keyword id="KW-0630">Potassium</keyword>
<accession>Q02DY9</accession>
<organism>
    <name type="scientific">Pseudomonas aeruginosa (strain UCBPP-PA14)</name>
    <dbReference type="NCBI Taxonomy" id="208963"/>
    <lineage>
        <taxon>Bacteria</taxon>
        <taxon>Pseudomonadati</taxon>
        <taxon>Pseudomonadota</taxon>
        <taxon>Gammaproteobacteria</taxon>
        <taxon>Pseudomonadales</taxon>
        <taxon>Pseudomonadaceae</taxon>
        <taxon>Pseudomonas</taxon>
    </lineage>
</organism>
<name>BETB_PSEAB</name>
<proteinExistence type="inferred from homology"/>
<evidence type="ECO:0000255" key="1">
    <source>
        <dbReference type="HAMAP-Rule" id="MF_00804"/>
    </source>
</evidence>
<protein>
    <recommendedName>
        <fullName evidence="1">Betaine aldehyde dehydrogenase</fullName>
        <shortName evidence="1">BADH</shortName>
        <ecNumber evidence="1">1.2.1.8</ecNumber>
    </recommendedName>
</protein>
<gene>
    <name evidence="1" type="primary">betB</name>
    <name type="ordered locus">PA14_70950</name>
</gene>